<evidence type="ECO:0000255" key="1">
    <source>
        <dbReference type="HAMAP-Rule" id="MF_00438"/>
    </source>
</evidence>
<reference key="1">
    <citation type="submission" date="2007-03" db="EMBL/GenBank/DDBJ databases">
        <title>Sequence analysis of Arabidopsis pumila JS2 chloroplast DNA.</title>
        <authorList>
            <person name="Hosouchi T."/>
            <person name="Tsuruoka H."/>
            <person name="Kotani H."/>
        </authorList>
    </citation>
    <scope>NUCLEOTIDE SEQUENCE [LARGE SCALE GENOMIC DNA]</scope>
</reference>
<gene>
    <name evidence="1" type="primary">psbM</name>
</gene>
<feature type="chain" id="PRO_0000325745" description="Photosystem II reaction center protein M">
    <location>
        <begin position="1"/>
        <end position="34"/>
    </location>
</feature>
<feature type="transmembrane region" description="Helical" evidence="1">
    <location>
        <begin position="5"/>
        <end position="25"/>
    </location>
</feature>
<protein>
    <recommendedName>
        <fullName evidence="1">Photosystem II reaction center protein M</fullName>
        <shortName evidence="1">PSII-M</shortName>
    </recommendedName>
</protein>
<comment type="function">
    <text evidence="1">One of the components of the core complex of photosystem II (PSII). PSII is a light-driven water:plastoquinone oxidoreductase that uses light energy to abstract electrons from H(2)O, generating O(2) and a proton gradient subsequently used for ATP formation. It consists of a core antenna complex that captures photons, and an electron transfer chain that converts photonic excitation into a charge separation. This subunit is found at the monomer-monomer interface.</text>
</comment>
<comment type="subunit">
    <text evidence="1">PSII is composed of 1 copy each of membrane proteins PsbA, PsbB, PsbC, PsbD, PsbE, PsbF, PsbH, PsbI, PsbJ, PsbK, PsbL, PsbM, PsbT, PsbX, PsbY, PsbZ, Psb30/Ycf12, at least 3 peripheral proteins of the oxygen-evolving complex and a large number of cofactors. It forms dimeric complexes.</text>
</comment>
<comment type="subcellular location">
    <subcellularLocation>
        <location evidence="1">Plastid</location>
        <location evidence="1">Chloroplast thylakoid membrane</location>
        <topology evidence="1">Single-pass membrane protein</topology>
    </subcellularLocation>
</comment>
<comment type="similarity">
    <text evidence="1">Belongs to the PsbM family.</text>
</comment>
<geneLocation type="chloroplast"/>
<sequence length="34" mass="3783">MEVNILAFIATALFILVPTAFLLIIYVKTVSQND</sequence>
<organism>
    <name type="scientific">Olimarabidopsis pumila</name>
    <name type="common">Dwarf rocket</name>
    <name type="synonym">Arabidopsis griffithiana</name>
    <dbReference type="NCBI Taxonomy" id="74718"/>
    <lineage>
        <taxon>Eukaryota</taxon>
        <taxon>Viridiplantae</taxon>
        <taxon>Streptophyta</taxon>
        <taxon>Embryophyta</taxon>
        <taxon>Tracheophyta</taxon>
        <taxon>Spermatophyta</taxon>
        <taxon>Magnoliopsida</taxon>
        <taxon>eudicotyledons</taxon>
        <taxon>Gunneridae</taxon>
        <taxon>Pentapetalae</taxon>
        <taxon>rosids</taxon>
        <taxon>malvids</taxon>
        <taxon>Brassicales</taxon>
        <taxon>Brassicaceae</taxon>
        <taxon>Alyssopsideae</taxon>
        <taxon>Olimarabidopsis</taxon>
    </lineage>
</organism>
<name>PSBM_OLIPU</name>
<keyword id="KW-0150">Chloroplast</keyword>
<keyword id="KW-0472">Membrane</keyword>
<keyword id="KW-0602">Photosynthesis</keyword>
<keyword id="KW-0604">Photosystem II</keyword>
<keyword id="KW-0934">Plastid</keyword>
<keyword id="KW-0674">Reaction center</keyword>
<keyword id="KW-0793">Thylakoid</keyword>
<keyword id="KW-0812">Transmembrane</keyword>
<keyword id="KW-1133">Transmembrane helix</keyword>
<accession>A4QJS7</accession>
<dbReference type="EMBL" id="AP009368">
    <property type="protein sequence ID" value="BAF49933.1"/>
    <property type="molecule type" value="Genomic_DNA"/>
</dbReference>
<dbReference type="RefSeq" id="YP_001123109.1">
    <property type="nucleotide sequence ID" value="NC_009267.1"/>
</dbReference>
<dbReference type="SMR" id="A4QJS7"/>
<dbReference type="GeneID" id="4962385"/>
<dbReference type="GO" id="GO:0009535">
    <property type="term" value="C:chloroplast thylakoid membrane"/>
    <property type="evidence" value="ECO:0007669"/>
    <property type="project" value="UniProtKB-SubCell"/>
</dbReference>
<dbReference type="GO" id="GO:0009523">
    <property type="term" value="C:photosystem II"/>
    <property type="evidence" value="ECO:0007669"/>
    <property type="project" value="UniProtKB-KW"/>
</dbReference>
<dbReference type="GO" id="GO:0019684">
    <property type="term" value="P:photosynthesis, light reaction"/>
    <property type="evidence" value="ECO:0007669"/>
    <property type="project" value="InterPro"/>
</dbReference>
<dbReference type="HAMAP" id="MF_00438">
    <property type="entry name" value="PSII_PsbM"/>
    <property type="match status" value="1"/>
</dbReference>
<dbReference type="InterPro" id="IPR007826">
    <property type="entry name" value="PSII_PsbM"/>
</dbReference>
<dbReference type="InterPro" id="IPR037269">
    <property type="entry name" value="PSII_PsbM_sf"/>
</dbReference>
<dbReference type="NCBIfam" id="TIGR03038">
    <property type="entry name" value="PS_II_psbM"/>
    <property type="match status" value="1"/>
</dbReference>
<dbReference type="PANTHER" id="PTHR35774">
    <property type="entry name" value="PHOTOSYSTEM II REACTION CENTER PROTEIN M"/>
    <property type="match status" value="1"/>
</dbReference>
<dbReference type="PANTHER" id="PTHR35774:SF1">
    <property type="entry name" value="PHOTOSYSTEM II REACTION CENTER PROTEIN M"/>
    <property type="match status" value="1"/>
</dbReference>
<dbReference type="Pfam" id="PF05151">
    <property type="entry name" value="PsbM"/>
    <property type="match status" value="1"/>
</dbReference>
<dbReference type="SUPFAM" id="SSF161033">
    <property type="entry name" value="Photosystem II reaction center protein M, PsbM"/>
    <property type="match status" value="1"/>
</dbReference>
<proteinExistence type="inferred from homology"/>